<name>RLMKL_STRMK</name>
<feature type="chain" id="PRO_0000366843" description="Ribosomal RNA large subunit methyltransferase K/L">
    <location>
        <begin position="1"/>
        <end position="712"/>
    </location>
</feature>
<feature type="domain" description="THUMP" evidence="1">
    <location>
        <begin position="42"/>
        <end position="153"/>
    </location>
</feature>
<organism>
    <name type="scientific">Stenotrophomonas maltophilia (strain K279a)</name>
    <dbReference type="NCBI Taxonomy" id="522373"/>
    <lineage>
        <taxon>Bacteria</taxon>
        <taxon>Pseudomonadati</taxon>
        <taxon>Pseudomonadota</taxon>
        <taxon>Gammaproteobacteria</taxon>
        <taxon>Lysobacterales</taxon>
        <taxon>Lysobacteraceae</taxon>
        <taxon>Stenotrophomonas</taxon>
        <taxon>Stenotrophomonas maltophilia group</taxon>
    </lineage>
</organism>
<accession>B2FJ58</accession>
<protein>
    <recommendedName>
        <fullName evidence="1">Ribosomal RNA large subunit methyltransferase K/L</fullName>
    </recommendedName>
    <domain>
        <recommendedName>
            <fullName evidence="1">23S rRNA m2G2445 methyltransferase</fullName>
            <ecNumber evidence="1">2.1.1.173</ecNumber>
        </recommendedName>
        <alternativeName>
            <fullName evidence="1">rRNA (guanine-N(2)-)-methyltransferase RlmL</fullName>
        </alternativeName>
    </domain>
    <domain>
        <recommendedName>
            <fullName evidence="1">23S rRNA m7G2069 methyltransferase</fullName>
            <ecNumber evidence="1">2.1.1.264</ecNumber>
        </recommendedName>
        <alternativeName>
            <fullName evidence="1">rRNA (guanine-N(7)-)-methyltransferase RlmK</fullName>
        </alternativeName>
    </domain>
</protein>
<gene>
    <name evidence="1" type="primary">rlmL</name>
    <name type="ordered locus">Smlt1564</name>
</gene>
<comment type="function">
    <text evidence="1">Specifically methylates the guanine in position 2445 (m2G2445) and the guanine in position 2069 (m7G2069) of 23S rRNA.</text>
</comment>
<comment type="catalytic activity">
    <reaction evidence="1">
        <text>guanosine(2445) in 23S rRNA + S-adenosyl-L-methionine = N(2)-methylguanosine(2445) in 23S rRNA + S-adenosyl-L-homocysteine + H(+)</text>
        <dbReference type="Rhea" id="RHEA:42740"/>
        <dbReference type="Rhea" id="RHEA-COMP:10215"/>
        <dbReference type="Rhea" id="RHEA-COMP:10216"/>
        <dbReference type="ChEBI" id="CHEBI:15378"/>
        <dbReference type="ChEBI" id="CHEBI:57856"/>
        <dbReference type="ChEBI" id="CHEBI:59789"/>
        <dbReference type="ChEBI" id="CHEBI:74269"/>
        <dbReference type="ChEBI" id="CHEBI:74481"/>
        <dbReference type="EC" id="2.1.1.173"/>
    </reaction>
</comment>
<comment type="catalytic activity">
    <reaction evidence="1">
        <text>guanosine(2069) in 23S rRNA + S-adenosyl-L-methionine = N(2)-methylguanosine(2069) in 23S rRNA + S-adenosyl-L-homocysteine + H(+)</text>
        <dbReference type="Rhea" id="RHEA:43772"/>
        <dbReference type="Rhea" id="RHEA-COMP:10688"/>
        <dbReference type="Rhea" id="RHEA-COMP:10689"/>
        <dbReference type="ChEBI" id="CHEBI:15378"/>
        <dbReference type="ChEBI" id="CHEBI:57856"/>
        <dbReference type="ChEBI" id="CHEBI:59789"/>
        <dbReference type="ChEBI" id="CHEBI:74269"/>
        <dbReference type="ChEBI" id="CHEBI:74481"/>
        <dbReference type="EC" id="2.1.1.264"/>
    </reaction>
</comment>
<comment type="subcellular location">
    <subcellularLocation>
        <location evidence="1">Cytoplasm</location>
    </subcellularLocation>
</comment>
<comment type="similarity">
    <text evidence="1">Belongs to the methyltransferase superfamily. RlmKL family.</text>
</comment>
<evidence type="ECO:0000255" key="1">
    <source>
        <dbReference type="HAMAP-Rule" id="MF_01858"/>
    </source>
</evidence>
<reference key="1">
    <citation type="journal article" date="2008" name="Genome Biol.">
        <title>The complete genome, comparative and functional analysis of Stenotrophomonas maltophilia reveals an organism heavily shielded by drug resistance determinants.</title>
        <authorList>
            <person name="Crossman L.C."/>
            <person name="Gould V.C."/>
            <person name="Dow J.M."/>
            <person name="Vernikos G.S."/>
            <person name="Okazaki A."/>
            <person name="Sebaihia M."/>
            <person name="Saunders D."/>
            <person name="Arrowsmith C."/>
            <person name="Carver T."/>
            <person name="Peters N."/>
            <person name="Adlem E."/>
            <person name="Kerhornou A."/>
            <person name="Lord A."/>
            <person name="Murphy L."/>
            <person name="Seeger K."/>
            <person name="Squares R."/>
            <person name="Rutter S."/>
            <person name="Quail M.A."/>
            <person name="Rajandream M.A."/>
            <person name="Harris D."/>
            <person name="Churcher C."/>
            <person name="Bentley S.D."/>
            <person name="Parkhill J."/>
            <person name="Thomson N.R."/>
            <person name="Avison M.B."/>
        </authorList>
    </citation>
    <scope>NUCLEOTIDE SEQUENCE [LARGE SCALE GENOMIC DNA]</scope>
    <source>
        <strain>K279a</strain>
    </source>
</reference>
<dbReference type="EC" id="2.1.1.173" evidence="1"/>
<dbReference type="EC" id="2.1.1.264" evidence="1"/>
<dbReference type="EMBL" id="AM743169">
    <property type="protein sequence ID" value="CAQ45097.1"/>
    <property type="molecule type" value="Genomic_DNA"/>
</dbReference>
<dbReference type="RefSeq" id="WP_012479644.1">
    <property type="nucleotide sequence ID" value="NC_010943.1"/>
</dbReference>
<dbReference type="SMR" id="B2FJ58"/>
<dbReference type="EnsemblBacteria" id="CAQ45097">
    <property type="protein sequence ID" value="CAQ45097"/>
    <property type="gene ID" value="Smlt1564"/>
</dbReference>
<dbReference type="KEGG" id="sml:Smlt1564"/>
<dbReference type="PATRIC" id="fig|522373.3.peg.1500"/>
<dbReference type="eggNOG" id="COG0116">
    <property type="taxonomic scope" value="Bacteria"/>
</dbReference>
<dbReference type="eggNOG" id="COG1092">
    <property type="taxonomic scope" value="Bacteria"/>
</dbReference>
<dbReference type="HOGENOM" id="CLU_014042_2_0_6"/>
<dbReference type="Proteomes" id="UP000008840">
    <property type="component" value="Chromosome"/>
</dbReference>
<dbReference type="GO" id="GO:0005737">
    <property type="term" value="C:cytoplasm"/>
    <property type="evidence" value="ECO:0007669"/>
    <property type="project" value="UniProtKB-SubCell"/>
</dbReference>
<dbReference type="GO" id="GO:0052915">
    <property type="term" value="F:23S rRNA (guanine(2445)-N(2))-methyltransferase activity"/>
    <property type="evidence" value="ECO:0007669"/>
    <property type="project" value="UniProtKB-UniRule"/>
</dbReference>
<dbReference type="GO" id="GO:0003723">
    <property type="term" value="F:RNA binding"/>
    <property type="evidence" value="ECO:0007669"/>
    <property type="project" value="UniProtKB-KW"/>
</dbReference>
<dbReference type="GO" id="GO:0070043">
    <property type="term" value="F:rRNA (guanine-N7-)-methyltransferase activity"/>
    <property type="evidence" value="ECO:0007669"/>
    <property type="project" value="UniProtKB-UniRule"/>
</dbReference>
<dbReference type="CDD" id="cd02440">
    <property type="entry name" value="AdoMet_MTases"/>
    <property type="match status" value="1"/>
</dbReference>
<dbReference type="CDD" id="cd11715">
    <property type="entry name" value="THUMP_AdoMetMT"/>
    <property type="match status" value="1"/>
</dbReference>
<dbReference type="FunFam" id="3.30.750.80:FF:000003">
    <property type="entry name" value="Ribosomal RNA large subunit methyltransferase K/L"/>
    <property type="match status" value="1"/>
</dbReference>
<dbReference type="Gene3D" id="3.30.2130.30">
    <property type="match status" value="1"/>
</dbReference>
<dbReference type="Gene3D" id="3.30.750.80">
    <property type="entry name" value="RNA methyltransferase domain (HRMD) like"/>
    <property type="match status" value="1"/>
</dbReference>
<dbReference type="Gene3D" id="3.40.50.150">
    <property type="entry name" value="Vaccinia Virus protein VP39"/>
    <property type="match status" value="2"/>
</dbReference>
<dbReference type="HAMAP" id="MF_01858">
    <property type="entry name" value="23SrRNA_methyltr_KL"/>
    <property type="match status" value="1"/>
</dbReference>
<dbReference type="InterPro" id="IPR017244">
    <property type="entry name" value="23SrRNA_methyltr_KL"/>
</dbReference>
<dbReference type="InterPro" id="IPR002052">
    <property type="entry name" value="DNA_methylase_N6_adenine_CS"/>
</dbReference>
<dbReference type="InterPro" id="IPR000241">
    <property type="entry name" value="RlmKL-like_Mtase"/>
</dbReference>
<dbReference type="InterPro" id="IPR053943">
    <property type="entry name" value="RlmKL-like_Mtase_CS"/>
</dbReference>
<dbReference type="InterPro" id="IPR054170">
    <property type="entry name" value="RlmL_1st"/>
</dbReference>
<dbReference type="InterPro" id="IPR019614">
    <property type="entry name" value="SAM-dep_methyl-trfase"/>
</dbReference>
<dbReference type="InterPro" id="IPR029063">
    <property type="entry name" value="SAM-dependent_MTases_sf"/>
</dbReference>
<dbReference type="InterPro" id="IPR004114">
    <property type="entry name" value="THUMP_dom"/>
</dbReference>
<dbReference type="NCBIfam" id="NF008748">
    <property type="entry name" value="PRK11783.1"/>
    <property type="match status" value="1"/>
</dbReference>
<dbReference type="PANTHER" id="PTHR47313">
    <property type="entry name" value="RIBOSOMAL RNA LARGE SUBUNIT METHYLTRANSFERASE K/L"/>
    <property type="match status" value="1"/>
</dbReference>
<dbReference type="PANTHER" id="PTHR47313:SF1">
    <property type="entry name" value="RIBOSOMAL RNA LARGE SUBUNIT METHYLTRANSFERASE K_L"/>
    <property type="match status" value="1"/>
</dbReference>
<dbReference type="Pfam" id="PF10672">
    <property type="entry name" value="Methyltrans_SAM"/>
    <property type="match status" value="1"/>
</dbReference>
<dbReference type="Pfam" id="PF22020">
    <property type="entry name" value="RlmL_1st"/>
    <property type="match status" value="1"/>
</dbReference>
<dbReference type="Pfam" id="PF02926">
    <property type="entry name" value="THUMP"/>
    <property type="match status" value="1"/>
</dbReference>
<dbReference type="Pfam" id="PF01170">
    <property type="entry name" value="UPF0020"/>
    <property type="match status" value="1"/>
</dbReference>
<dbReference type="PIRSF" id="PIRSF037618">
    <property type="entry name" value="RNA_Mtase_bacteria_prd"/>
    <property type="match status" value="1"/>
</dbReference>
<dbReference type="SMART" id="SM00981">
    <property type="entry name" value="THUMP"/>
    <property type="match status" value="1"/>
</dbReference>
<dbReference type="SUPFAM" id="SSF53335">
    <property type="entry name" value="S-adenosyl-L-methionine-dependent methyltransferases"/>
    <property type="match status" value="2"/>
</dbReference>
<dbReference type="PROSITE" id="PS51165">
    <property type="entry name" value="THUMP"/>
    <property type="match status" value="1"/>
</dbReference>
<dbReference type="PROSITE" id="PS01261">
    <property type="entry name" value="UPF0020"/>
    <property type="match status" value="1"/>
</dbReference>
<proteinExistence type="inferred from homology"/>
<keyword id="KW-0963">Cytoplasm</keyword>
<keyword id="KW-0489">Methyltransferase</keyword>
<keyword id="KW-1185">Reference proteome</keyword>
<keyword id="KW-0694">RNA-binding</keyword>
<keyword id="KW-0698">rRNA processing</keyword>
<keyword id="KW-0949">S-adenosyl-L-methionine</keyword>
<keyword id="KW-0808">Transferase</keyword>
<sequence length="712" mass="78596">MKFFVSCAKGLEYLLADELSALGLGKATATIAGVNAEGELEQALRIVMWSRLASRVLWPIDEFECPDEQALYDGVRALPWHEHIKPEMTLAVDAHVSGDKITHARFAAQRIKDAIVDRMRDEGLERPSVNTDLPDVRVNLSLRKGRASLSIDLGGGPLHRRGWRGAAHEAPLKENLAAALLLRAQWPRLHAAGGGLLDPMCGSGTLLIEGALMAADVAPGLMRHGSLPPSRWLGFDKSAWKTIQSEARDREAAGLAALKPVIHGSDIDPTAIQAARENAEVAGVAHAIRFTRADVADLAAPEQEIGAVVCNPPYDERLAADPALYRALGNALQKAVPQWRASLLCGNDELAFATGLRAGKKYQMFNGALECALIVCDPIAVPGRDPAQPRELSEGAQMVANRLRKNLKKFKSWRAREDITCFRAYDADLPEYAAAIDVYEEDGGKRRTFLHVQEYAAPAAIPENDVRRRRNELLAAAREVFGVPPEQVSMKSRERGKGGSKYGRFEQRDEFIVVRENNALLQVNLFDYLDTGLFLDHRPLRRMMAEQVRGKRFLNLFCYTGVASVQAAVAGAASTTSVDLSATYLQWCYDNLALNGQGGNQHLLVQADAMAWLEGDRGQYDVIFCDPPTFSNSARADDFDVQREQLKLLRAAVARLAPGGVLYFSNNFRRFKLEENAIAEFAQCREITARTIGPDFERNARIHRAWELKRLG</sequence>